<dbReference type="EMBL" id="U67451">
    <property type="protein sequence ID" value="AAB08875.1"/>
    <property type="molecule type" value="mRNA"/>
</dbReference>
<dbReference type="SMR" id="Q96355"/>
<dbReference type="GO" id="GO:0005634">
    <property type="term" value="C:nucleus"/>
    <property type="evidence" value="ECO:0007669"/>
    <property type="project" value="UniProtKB-SubCell"/>
</dbReference>
<dbReference type="GO" id="GO:0003700">
    <property type="term" value="F:DNA-binding transcription factor activity"/>
    <property type="evidence" value="ECO:0007669"/>
    <property type="project" value="InterPro"/>
</dbReference>
<dbReference type="GO" id="GO:0046983">
    <property type="term" value="F:protein dimerization activity"/>
    <property type="evidence" value="ECO:0007669"/>
    <property type="project" value="InterPro"/>
</dbReference>
<dbReference type="GO" id="GO:0000977">
    <property type="term" value="F:RNA polymerase II transcription regulatory region sequence-specific DNA binding"/>
    <property type="evidence" value="ECO:0007669"/>
    <property type="project" value="InterPro"/>
</dbReference>
<dbReference type="GO" id="GO:0030154">
    <property type="term" value="P:cell differentiation"/>
    <property type="evidence" value="ECO:0007669"/>
    <property type="project" value="UniProtKB-KW"/>
</dbReference>
<dbReference type="GO" id="GO:0009908">
    <property type="term" value="P:flower development"/>
    <property type="evidence" value="ECO:0007669"/>
    <property type="project" value="UniProtKB-KW"/>
</dbReference>
<dbReference type="GO" id="GO:0045944">
    <property type="term" value="P:positive regulation of transcription by RNA polymerase II"/>
    <property type="evidence" value="ECO:0007669"/>
    <property type="project" value="InterPro"/>
</dbReference>
<dbReference type="CDD" id="cd00265">
    <property type="entry name" value="MADS_MEF2_like"/>
    <property type="match status" value="1"/>
</dbReference>
<dbReference type="FunFam" id="3.40.1810.10:FF:000003">
    <property type="entry name" value="MADS-box transcription factor MADS-MC"/>
    <property type="match status" value="1"/>
</dbReference>
<dbReference type="Gene3D" id="3.40.1810.10">
    <property type="entry name" value="Transcription factor, MADS-box"/>
    <property type="match status" value="1"/>
</dbReference>
<dbReference type="InterPro" id="IPR050142">
    <property type="entry name" value="MADS-box/MEF2_TF"/>
</dbReference>
<dbReference type="InterPro" id="IPR033896">
    <property type="entry name" value="MEF2-like_N"/>
</dbReference>
<dbReference type="InterPro" id="IPR002487">
    <property type="entry name" value="TF_Kbox"/>
</dbReference>
<dbReference type="InterPro" id="IPR002100">
    <property type="entry name" value="TF_MADSbox"/>
</dbReference>
<dbReference type="InterPro" id="IPR036879">
    <property type="entry name" value="TF_MADSbox_sf"/>
</dbReference>
<dbReference type="PANTHER" id="PTHR48019">
    <property type="entry name" value="SERUM RESPONSE FACTOR HOMOLOG"/>
    <property type="match status" value="1"/>
</dbReference>
<dbReference type="Pfam" id="PF01486">
    <property type="entry name" value="K-box"/>
    <property type="match status" value="1"/>
</dbReference>
<dbReference type="Pfam" id="PF00319">
    <property type="entry name" value="SRF-TF"/>
    <property type="match status" value="1"/>
</dbReference>
<dbReference type="PRINTS" id="PR00404">
    <property type="entry name" value="MADSDOMAIN"/>
</dbReference>
<dbReference type="SMART" id="SM00432">
    <property type="entry name" value="MADS"/>
    <property type="match status" value="1"/>
</dbReference>
<dbReference type="SUPFAM" id="SSF55455">
    <property type="entry name" value="SRF-like"/>
    <property type="match status" value="1"/>
</dbReference>
<dbReference type="PROSITE" id="PS51297">
    <property type="entry name" value="K_BOX"/>
    <property type="match status" value="1"/>
</dbReference>
<dbReference type="PROSITE" id="PS00350">
    <property type="entry name" value="MADS_BOX_1"/>
    <property type="match status" value="1"/>
</dbReference>
<dbReference type="PROSITE" id="PS50066">
    <property type="entry name" value="MADS_BOX_2"/>
    <property type="match status" value="1"/>
</dbReference>
<sequence>MGRGRVQLKRIENKINRQVTFSKRRAGLFKKAHEISVLCDAEVALVVFSHKGKLFEYSTDSCMEKILERYERYSYAERQLIAPESDVNTNWSMEYNRLKAKIELLERNQRHYLGEDLQAMSPKELQNLEQQLDTALKHIRSRKNQLMYDSVNELQRKEKAIQEQNSMLSKQIKEREKVLMAQQEQWDQQNHGQNMPSPPPPQQHQIQHPYMLSHQPSPFLNMGGLYQEEDPMAMRRNDLDLSLEPVYNCNLGCFAA</sequence>
<evidence type="ECO:0000250" key="1"/>
<evidence type="ECO:0000255" key="2">
    <source>
        <dbReference type="PROSITE-ProRule" id="PRU00251"/>
    </source>
</evidence>
<evidence type="ECO:0000255" key="3">
    <source>
        <dbReference type="PROSITE-ProRule" id="PRU00629"/>
    </source>
</evidence>
<evidence type="ECO:0000269" key="4">
    <source>
    </source>
</evidence>
<gene>
    <name type="primary">1AP1</name>
</gene>
<organism>
    <name type="scientific">Brassica oleracea var. italica</name>
    <name type="common">Broccoli</name>
    <dbReference type="NCBI Taxonomy" id="36774"/>
    <lineage>
        <taxon>Eukaryota</taxon>
        <taxon>Viridiplantae</taxon>
        <taxon>Streptophyta</taxon>
        <taxon>Embryophyta</taxon>
        <taxon>Tracheophyta</taxon>
        <taxon>Spermatophyta</taxon>
        <taxon>Magnoliopsida</taxon>
        <taxon>eudicotyledons</taxon>
        <taxon>Gunneridae</taxon>
        <taxon>Pentapetalae</taxon>
        <taxon>rosids</taxon>
        <taxon>malvids</taxon>
        <taxon>Brassicales</taxon>
        <taxon>Brassicaceae</taxon>
        <taxon>Brassiceae</taxon>
        <taxon>Brassica</taxon>
    </lineage>
</organism>
<reference key="1">
    <citation type="journal article" date="1997" name="Planta">
        <title>Floral homeotic gene expression defines developmental arrest stages in Brassica oleracea L. vars. botrytis and italica.</title>
        <authorList>
            <person name="Carr S.M."/>
            <person name="Irish V.F."/>
        </authorList>
    </citation>
    <scope>NUCLEOTIDE SEQUENCE [MRNA]</scope>
    <scope>TISSUE SPECIFICITY</scope>
    <scope>DEVELOPMENTAL STAGE</scope>
    <source>
        <tissue>Flower</tissue>
    </source>
</reference>
<name>1AP1_BRAOT</name>
<feature type="chain" id="PRO_0000417135" description="Floral homeotic protein APETALA 1-1">
    <location>
        <begin position="1"/>
        <end position="256"/>
    </location>
</feature>
<feature type="domain" description="MADS-box" evidence="2">
    <location>
        <begin position="1"/>
        <end position="61"/>
    </location>
</feature>
<feature type="domain" description="K-box" evidence="3">
    <location>
        <begin position="88"/>
        <end position="178"/>
    </location>
</feature>
<protein>
    <recommendedName>
        <fullName>Floral homeotic protein APETALA 1-1</fullName>
        <shortName>Boi1AP1</shortName>
    </recommendedName>
    <alternativeName>
        <fullName>Agamous-like MADS-box protein 1AP1</fullName>
    </alternativeName>
</protein>
<proteinExistence type="evidence at transcript level"/>
<keyword id="KW-0010">Activator</keyword>
<keyword id="KW-0175">Coiled coil</keyword>
<keyword id="KW-0217">Developmental protein</keyword>
<keyword id="KW-0221">Differentiation</keyword>
<keyword id="KW-0238">DNA-binding</keyword>
<keyword id="KW-0287">Flowering</keyword>
<keyword id="KW-0539">Nucleus</keyword>
<keyword id="KW-0804">Transcription</keyword>
<keyword id="KW-0805">Transcription regulation</keyword>
<accession>Q96355</accession>
<comment type="function">
    <text evidence="1">Transcription factor that promotes early floral meristem identity in synergy with LEAFY. Displays a redundant function with CAULIFLOWER in the up-regulation of LEAFY. Required subsequently for the transition of an inflorescence meristem into a floral meristem, and for the normal development of sepals and petals in flowers. Regulates positively B class homeotic proteins (By similarity).</text>
</comment>
<comment type="subunit">
    <text evidence="1">Homodimer capable of binding to CArG-box sequences.</text>
</comment>
<comment type="subcellular location">
    <subcellularLocation>
        <location evidence="2">Nucleus</location>
    </subcellularLocation>
</comment>
<comment type="tissue specificity">
    <text evidence="4">Expressed in some of the meristems of arrest-stage broccoli heads.</text>
</comment>
<comment type="developmental stage">
    <text evidence="4">First observed in young floral meristem before organs initiation. Accumulates strongly in the sepals of the early stage bud. In more mature buds, expressed on the adaxial side of the sepals, in the petal primordia, and transiently in young stamen primordia.</text>
</comment>